<accession>B7J7B0</accession>
<name>RECX_ACIF2</name>
<comment type="function">
    <text evidence="1">Modulates RecA activity.</text>
</comment>
<comment type="subcellular location">
    <subcellularLocation>
        <location evidence="1">Cytoplasm</location>
    </subcellularLocation>
</comment>
<comment type="similarity">
    <text evidence="1">Belongs to the RecX family.</text>
</comment>
<reference key="1">
    <citation type="journal article" date="2008" name="BMC Genomics">
        <title>Acidithiobacillus ferrooxidans metabolism: from genome sequence to industrial applications.</title>
        <authorList>
            <person name="Valdes J."/>
            <person name="Pedroso I."/>
            <person name="Quatrini R."/>
            <person name="Dodson R.J."/>
            <person name="Tettelin H."/>
            <person name="Blake R. II"/>
            <person name="Eisen J.A."/>
            <person name="Holmes D.S."/>
        </authorList>
    </citation>
    <scope>NUCLEOTIDE SEQUENCE [LARGE SCALE GENOMIC DNA]</scope>
    <source>
        <strain>ATCC 23270 / DSM 14882 / CIP 104768 / NCIMB 8455</strain>
    </source>
</reference>
<evidence type="ECO:0000255" key="1">
    <source>
        <dbReference type="HAMAP-Rule" id="MF_01114"/>
    </source>
</evidence>
<proteinExistence type="inferred from homology"/>
<organism>
    <name type="scientific">Acidithiobacillus ferrooxidans (strain ATCC 23270 / DSM 14882 / CIP 104768 / NCIMB 8455)</name>
    <name type="common">Ferrobacillus ferrooxidans (strain ATCC 23270)</name>
    <dbReference type="NCBI Taxonomy" id="243159"/>
    <lineage>
        <taxon>Bacteria</taxon>
        <taxon>Pseudomonadati</taxon>
        <taxon>Pseudomonadota</taxon>
        <taxon>Acidithiobacillia</taxon>
        <taxon>Acidithiobacillales</taxon>
        <taxon>Acidithiobacillaceae</taxon>
        <taxon>Acidithiobacillus</taxon>
    </lineage>
</organism>
<dbReference type="EMBL" id="CP001219">
    <property type="protein sequence ID" value="ACK79884.1"/>
    <property type="molecule type" value="Genomic_DNA"/>
</dbReference>
<dbReference type="RefSeq" id="WP_009564301.1">
    <property type="nucleotide sequence ID" value="NC_011761.1"/>
</dbReference>
<dbReference type="SMR" id="B7J7B0"/>
<dbReference type="STRING" id="243159.AFE_0933"/>
<dbReference type="PaxDb" id="243159-AFE_0933"/>
<dbReference type="GeneID" id="65280254"/>
<dbReference type="KEGG" id="afr:AFE_0933"/>
<dbReference type="eggNOG" id="COG2137">
    <property type="taxonomic scope" value="Bacteria"/>
</dbReference>
<dbReference type="HOGENOM" id="CLU_066607_3_2_6"/>
<dbReference type="Proteomes" id="UP000001362">
    <property type="component" value="Chromosome"/>
</dbReference>
<dbReference type="GO" id="GO:0005737">
    <property type="term" value="C:cytoplasm"/>
    <property type="evidence" value="ECO:0007669"/>
    <property type="project" value="UniProtKB-SubCell"/>
</dbReference>
<dbReference type="GO" id="GO:0006282">
    <property type="term" value="P:regulation of DNA repair"/>
    <property type="evidence" value="ECO:0007669"/>
    <property type="project" value="UniProtKB-UniRule"/>
</dbReference>
<dbReference type="Gene3D" id="1.10.10.10">
    <property type="entry name" value="Winged helix-like DNA-binding domain superfamily/Winged helix DNA-binding domain"/>
    <property type="match status" value="3"/>
</dbReference>
<dbReference type="HAMAP" id="MF_01114">
    <property type="entry name" value="RecX"/>
    <property type="match status" value="1"/>
</dbReference>
<dbReference type="InterPro" id="IPR053926">
    <property type="entry name" value="RecX_HTH_1st"/>
</dbReference>
<dbReference type="InterPro" id="IPR053924">
    <property type="entry name" value="RecX_HTH_2nd"/>
</dbReference>
<dbReference type="InterPro" id="IPR053925">
    <property type="entry name" value="RecX_HTH_3rd"/>
</dbReference>
<dbReference type="InterPro" id="IPR003783">
    <property type="entry name" value="Regulatory_RecX"/>
</dbReference>
<dbReference type="InterPro" id="IPR036388">
    <property type="entry name" value="WH-like_DNA-bd_sf"/>
</dbReference>
<dbReference type="PANTHER" id="PTHR33602">
    <property type="entry name" value="REGULATORY PROTEIN RECX FAMILY PROTEIN"/>
    <property type="match status" value="1"/>
</dbReference>
<dbReference type="PANTHER" id="PTHR33602:SF1">
    <property type="entry name" value="REGULATORY PROTEIN RECX FAMILY PROTEIN"/>
    <property type="match status" value="1"/>
</dbReference>
<dbReference type="Pfam" id="PF21982">
    <property type="entry name" value="RecX_HTH1"/>
    <property type="match status" value="1"/>
</dbReference>
<dbReference type="Pfam" id="PF02631">
    <property type="entry name" value="RecX_HTH2"/>
    <property type="match status" value="1"/>
</dbReference>
<dbReference type="Pfam" id="PF21981">
    <property type="entry name" value="RecX_HTH3"/>
    <property type="match status" value="1"/>
</dbReference>
<keyword id="KW-0963">Cytoplasm</keyword>
<keyword id="KW-1185">Reference proteome</keyword>
<sequence>MTTERSDPTALALRLLARREYGRRELGDKLLRAGCDAGDVALALDALAAAGYQDDARYVEMLTRTRVRQGHGPLRLRQDLQRAGIEVGADPEIDWLQQAQAVCRKRFGNTPPADARDYARRARFLAGRGFTGETIRQVLGAGRERDFAAD</sequence>
<feature type="chain" id="PRO_1000164008" description="Regulatory protein RecX">
    <location>
        <begin position="1"/>
        <end position="150"/>
    </location>
</feature>
<protein>
    <recommendedName>
        <fullName evidence="1">Regulatory protein RecX</fullName>
    </recommendedName>
</protein>
<gene>
    <name evidence="1" type="primary">recX</name>
    <name type="ordered locus">AFE_0933</name>
</gene>